<name>RS6_HYPNA</name>
<reference key="1">
    <citation type="journal article" date="2006" name="J. Bacteriol.">
        <title>Comparative genomic evidence for a close relationship between the dimorphic prosthecate bacteria Hyphomonas neptunium and Caulobacter crescentus.</title>
        <authorList>
            <person name="Badger J.H."/>
            <person name="Hoover T.R."/>
            <person name="Brun Y.V."/>
            <person name="Weiner R.M."/>
            <person name="Laub M.T."/>
            <person name="Alexandre G."/>
            <person name="Mrazek J."/>
            <person name="Ren Q."/>
            <person name="Paulsen I.T."/>
            <person name="Nelson K.E."/>
            <person name="Khouri H.M."/>
            <person name="Radune D."/>
            <person name="Sosa J."/>
            <person name="Dodson R.J."/>
            <person name="Sullivan S.A."/>
            <person name="Rosovitz M.J."/>
            <person name="Madupu R."/>
            <person name="Brinkac L.M."/>
            <person name="Durkin A.S."/>
            <person name="Daugherty S.C."/>
            <person name="Kothari S.P."/>
            <person name="Giglio M.G."/>
            <person name="Zhou L."/>
            <person name="Haft D.H."/>
            <person name="Selengut J.D."/>
            <person name="Davidsen T.M."/>
            <person name="Yang Q."/>
            <person name="Zafar N."/>
            <person name="Ward N.L."/>
        </authorList>
    </citation>
    <scope>NUCLEOTIDE SEQUENCE [LARGE SCALE GENOMIC DNA]</scope>
    <source>
        <strain>ATCC 15444</strain>
    </source>
</reference>
<keyword id="KW-1185">Reference proteome</keyword>
<keyword id="KW-0687">Ribonucleoprotein</keyword>
<keyword id="KW-0689">Ribosomal protein</keyword>
<keyword id="KW-0694">RNA-binding</keyword>
<keyword id="KW-0699">rRNA-binding</keyword>
<organism>
    <name type="scientific">Hyphomonas neptunium (strain ATCC 15444)</name>
    <dbReference type="NCBI Taxonomy" id="228405"/>
    <lineage>
        <taxon>Bacteria</taxon>
        <taxon>Pseudomonadati</taxon>
        <taxon>Pseudomonadota</taxon>
        <taxon>Alphaproteobacteria</taxon>
        <taxon>Hyphomonadales</taxon>
        <taxon>Hyphomonadaceae</taxon>
        <taxon>Hyphomonas</taxon>
    </lineage>
</organism>
<accession>Q0C085</accession>
<proteinExistence type="inferred from homology"/>
<dbReference type="EMBL" id="CP000158">
    <property type="protein sequence ID" value="ABI78461.1"/>
    <property type="molecule type" value="Genomic_DNA"/>
</dbReference>
<dbReference type="RefSeq" id="WP_011647156.1">
    <property type="nucleotide sequence ID" value="NC_008358.1"/>
</dbReference>
<dbReference type="SMR" id="Q0C085"/>
<dbReference type="STRING" id="228405.HNE_2161"/>
<dbReference type="KEGG" id="hne:HNE_2161"/>
<dbReference type="eggNOG" id="COG0360">
    <property type="taxonomic scope" value="Bacteria"/>
</dbReference>
<dbReference type="HOGENOM" id="CLU_113441_2_0_5"/>
<dbReference type="Proteomes" id="UP000001959">
    <property type="component" value="Chromosome"/>
</dbReference>
<dbReference type="GO" id="GO:0022627">
    <property type="term" value="C:cytosolic small ribosomal subunit"/>
    <property type="evidence" value="ECO:0007669"/>
    <property type="project" value="TreeGrafter"/>
</dbReference>
<dbReference type="GO" id="GO:0070181">
    <property type="term" value="F:small ribosomal subunit rRNA binding"/>
    <property type="evidence" value="ECO:0007669"/>
    <property type="project" value="TreeGrafter"/>
</dbReference>
<dbReference type="GO" id="GO:0003735">
    <property type="term" value="F:structural constituent of ribosome"/>
    <property type="evidence" value="ECO:0007669"/>
    <property type="project" value="InterPro"/>
</dbReference>
<dbReference type="GO" id="GO:0006412">
    <property type="term" value="P:translation"/>
    <property type="evidence" value="ECO:0007669"/>
    <property type="project" value="UniProtKB-UniRule"/>
</dbReference>
<dbReference type="CDD" id="cd00473">
    <property type="entry name" value="bS6"/>
    <property type="match status" value="1"/>
</dbReference>
<dbReference type="Gene3D" id="3.30.70.60">
    <property type="match status" value="1"/>
</dbReference>
<dbReference type="HAMAP" id="MF_00360">
    <property type="entry name" value="Ribosomal_bS6"/>
    <property type="match status" value="1"/>
</dbReference>
<dbReference type="InterPro" id="IPR000529">
    <property type="entry name" value="Ribosomal_bS6"/>
</dbReference>
<dbReference type="InterPro" id="IPR035980">
    <property type="entry name" value="Ribosomal_bS6_sf"/>
</dbReference>
<dbReference type="InterPro" id="IPR020814">
    <property type="entry name" value="Ribosomal_S6_plastid/chlpt"/>
</dbReference>
<dbReference type="InterPro" id="IPR014717">
    <property type="entry name" value="Transl_elong_EF1B/ribsomal_bS6"/>
</dbReference>
<dbReference type="NCBIfam" id="TIGR00166">
    <property type="entry name" value="S6"/>
    <property type="match status" value="1"/>
</dbReference>
<dbReference type="PANTHER" id="PTHR21011">
    <property type="entry name" value="MITOCHONDRIAL 28S RIBOSOMAL PROTEIN S6"/>
    <property type="match status" value="1"/>
</dbReference>
<dbReference type="PANTHER" id="PTHR21011:SF1">
    <property type="entry name" value="SMALL RIBOSOMAL SUBUNIT PROTEIN BS6M"/>
    <property type="match status" value="1"/>
</dbReference>
<dbReference type="Pfam" id="PF01250">
    <property type="entry name" value="Ribosomal_S6"/>
    <property type="match status" value="1"/>
</dbReference>
<dbReference type="SUPFAM" id="SSF54995">
    <property type="entry name" value="Ribosomal protein S6"/>
    <property type="match status" value="1"/>
</dbReference>
<comment type="function">
    <text evidence="1">Binds together with bS18 to 16S ribosomal RNA.</text>
</comment>
<comment type="similarity">
    <text evidence="1">Belongs to the bacterial ribosomal protein bS6 family.</text>
</comment>
<protein>
    <recommendedName>
        <fullName evidence="1">Small ribosomal subunit protein bS6</fullName>
    </recommendedName>
    <alternativeName>
        <fullName evidence="2">30S ribosomal protein S6</fullName>
    </alternativeName>
</protein>
<sequence>MALYEHVVITRPDISPAQVESFIEEMTTFLKEKGATVGKTEYWGLRSLAYPIKKQRKGHYSLINIDGPADAIHELERRQRIAEDVMRYMTVRVETLSDEPSPVLSRKERRRD</sequence>
<feature type="chain" id="PRO_1000005277" description="Small ribosomal subunit protein bS6">
    <location>
        <begin position="1"/>
        <end position="112"/>
    </location>
</feature>
<evidence type="ECO:0000255" key="1">
    <source>
        <dbReference type="HAMAP-Rule" id="MF_00360"/>
    </source>
</evidence>
<evidence type="ECO:0000305" key="2"/>
<gene>
    <name evidence="1" type="primary">rpsF</name>
    <name type="ordered locus">HNE_2161</name>
</gene>